<organism>
    <name type="scientific">Bacillus anthracis (strain A0248)</name>
    <dbReference type="NCBI Taxonomy" id="592021"/>
    <lineage>
        <taxon>Bacteria</taxon>
        <taxon>Bacillati</taxon>
        <taxon>Bacillota</taxon>
        <taxon>Bacilli</taxon>
        <taxon>Bacillales</taxon>
        <taxon>Bacillaceae</taxon>
        <taxon>Bacillus</taxon>
        <taxon>Bacillus cereus group</taxon>
    </lineage>
</organism>
<accession>C3P965</accession>
<comment type="function">
    <text evidence="1">Could be a S-adenosyl-L-methionine-dependent methyltransferase.</text>
</comment>
<comment type="similarity">
    <text evidence="1">Belongs to the methyltransferase superfamily. YrrT family.</text>
</comment>
<feature type="chain" id="PRO_1000189546" description="Uncharacterized methyltransferase BAA_4623">
    <location>
        <begin position="1"/>
        <end position="212"/>
    </location>
</feature>
<feature type="binding site" evidence="1">
    <location>
        <position position="53"/>
    </location>
    <ligand>
        <name>S-adenosyl-L-methionine</name>
        <dbReference type="ChEBI" id="CHEBI:59789"/>
    </ligand>
</feature>
<feature type="binding site" evidence="1">
    <location>
        <position position="74"/>
    </location>
    <ligand>
        <name>S-adenosyl-L-methionine</name>
        <dbReference type="ChEBI" id="CHEBI:59789"/>
    </ligand>
</feature>
<feature type="binding site" evidence="1">
    <location>
        <position position="97"/>
    </location>
    <ligand>
        <name>S-adenosyl-L-methionine</name>
        <dbReference type="ChEBI" id="CHEBI:59789"/>
    </ligand>
</feature>
<protein>
    <recommendedName>
        <fullName evidence="1">Uncharacterized methyltransferase BAA_4623</fullName>
        <ecNumber evidence="1">2.1.1.-</ecNumber>
    </recommendedName>
</protein>
<evidence type="ECO:0000255" key="1">
    <source>
        <dbReference type="HAMAP-Rule" id="MF_02100"/>
    </source>
</evidence>
<dbReference type="EC" id="2.1.1.-" evidence="1"/>
<dbReference type="EMBL" id="CP001598">
    <property type="protein sequence ID" value="ACQ48279.1"/>
    <property type="molecule type" value="Genomic_DNA"/>
</dbReference>
<dbReference type="RefSeq" id="WP_000536319.1">
    <property type="nucleotide sequence ID" value="NC_012659.1"/>
</dbReference>
<dbReference type="SMR" id="C3P965"/>
<dbReference type="KEGG" id="bai:BAA_4623"/>
<dbReference type="HOGENOM" id="CLU_111961_0_0_9"/>
<dbReference type="GO" id="GO:0008757">
    <property type="term" value="F:S-adenosylmethionine-dependent methyltransferase activity"/>
    <property type="evidence" value="ECO:0007669"/>
    <property type="project" value="UniProtKB-UniRule"/>
</dbReference>
<dbReference type="GO" id="GO:0032259">
    <property type="term" value="P:methylation"/>
    <property type="evidence" value="ECO:0007669"/>
    <property type="project" value="UniProtKB-KW"/>
</dbReference>
<dbReference type="CDD" id="cd02440">
    <property type="entry name" value="AdoMet_MTases"/>
    <property type="match status" value="1"/>
</dbReference>
<dbReference type="Gene3D" id="3.40.50.150">
    <property type="entry name" value="Vaccinia Virus protein VP39"/>
    <property type="match status" value="1"/>
</dbReference>
<dbReference type="HAMAP" id="MF_02100">
    <property type="entry name" value="Methyltr_YrrT"/>
    <property type="match status" value="1"/>
</dbReference>
<dbReference type="InterPro" id="IPR041698">
    <property type="entry name" value="Methyltransf_25"/>
</dbReference>
<dbReference type="InterPro" id="IPR029063">
    <property type="entry name" value="SAM-dependent_MTases_sf"/>
</dbReference>
<dbReference type="InterPro" id="IPR023553">
    <property type="entry name" value="Uncharacterised_MeTfrase_YrrT"/>
</dbReference>
<dbReference type="PANTHER" id="PTHR43861:SF1">
    <property type="entry name" value="TRANS-ACONITATE 2-METHYLTRANSFERASE"/>
    <property type="match status" value="1"/>
</dbReference>
<dbReference type="PANTHER" id="PTHR43861">
    <property type="entry name" value="TRANS-ACONITATE 2-METHYLTRANSFERASE-RELATED"/>
    <property type="match status" value="1"/>
</dbReference>
<dbReference type="Pfam" id="PF13649">
    <property type="entry name" value="Methyltransf_25"/>
    <property type="match status" value="1"/>
</dbReference>
<dbReference type="SUPFAM" id="SSF53335">
    <property type="entry name" value="S-adenosyl-L-methionine-dependent methyltransferases"/>
    <property type="match status" value="1"/>
</dbReference>
<reference key="1">
    <citation type="submission" date="2009-04" db="EMBL/GenBank/DDBJ databases">
        <title>Genome sequence of Bacillus anthracis A0248.</title>
        <authorList>
            <person name="Dodson R.J."/>
            <person name="Munk A.C."/>
            <person name="Bruce D."/>
            <person name="Detter C."/>
            <person name="Tapia R."/>
            <person name="Sutton G."/>
            <person name="Sims D."/>
            <person name="Brettin T."/>
        </authorList>
    </citation>
    <scope>NUCLEOTIDE SEQUENCE [LARGE SCALE GENOMIC DNA]</scope>
    <source>
        <strain>A0248</strain>
    </source>
</reference>
<gene>
    <name type="ordered locus">BAA_4623</name>
</gene>
<proteinExistence type="inferred from homology"/>
<name>Y4623_BACAA</name>
<sequence length="212" mass="24277">MGTEFNGLFDEWAHTYDSFVQGEDIQYKEVFAHYEDILEDVVNKSFGNVLEFGVGTGNLTNKLLLAGRTVYGIEPSREMRMIAKEKLPKEFSITEGDFLSFEVPNSIDTIVSTYAFHHLTDDEKNVAIAKYSQLLNKGGKIVFADTIFADQDAYDKTVEAAKQRGFHQLANDLQTEYYTRIPVMQTIFENNGFHVTFTRLNHFVWVMEATKQ</sequence>
<keyword id="KW-0489">Methyltransferase</keyword>
<keyword id="KW-0949">S-adenosyl-L-methionine</keyword>
<keyword id="KW-0808">Transferase</keyword>